<proteinExistence type="inferred from homology"/>
<gene>
    <name evidence="1" type="primary">dnaJ</name>
    <name type="ordered locus">RB8972</name>
</gene>
<accession>Q7UM96</accession>
<feature type="chain" id="PRO_0000070867" description="Chaperone protein DnaJ">
    <location>
        <begin position="1"/>
        <end position="391"/>
    </location>
</feature>
<feature type="domain" description="J" evidence="1">
    <location>
        <begin position="6"/>
        <end position="71"/>
    </location>
</feature>
<feature type="repeat" description="CXXCXGXG motif">
    <location>
        <begin position="150"/>
        <end position="157"/>
    </location>
</feature>
<feature type="repeat" description="CXXCXGXG motif">
    <location>
        <begin position="167"/>
        <end position="174"/>
    </location>
</feature>
<feature type="repeat" description="CXXCXGXG motif">
    <location>
        <begin position="189"/>
        <end position="196"/>
    </location>
</feature>
<feature type="repeat" description="CXXCXGXG motif">
    <location>
        <begin position="203"/>
        <end position="210"/>
    </location>
</feature>
<feature type="zinc finger region" description="CR-type" evidence="1">
    <location>
        <begin position="137"/>
        <end position="215"/>
    </location>
</feature>
<feature type="region of interest" description="Disordered" evidence="2">
    <location>
        <begin position="372"/>
        <end position="391"/>
    </location>
</feature>
<feature type="binding site" evidence="1">
    <location>
        <position position="150"/>
    </location>
    <ligand>
        <name>Zn(2+)</name>
        <dbReference type="ChEBI" id="CHEBI:29105"/>
        <label>1</label>
    </ligand>
</feature>
<feature type="binding site" evidence="1">
    <location>
        <position position="153"/>
    </location>
    <ligand>
        <name>Zn(2+)</name>
        <dbReference type="ChEBI" id="CHEBI:29105"/>
        <label>1</label>
    </ligand>
</feature>
<feature type="binding site" evidence="1">
    <location>
        <position position="167"/>
    </location>
    <ligand>
        <name>Zn(2+)</name>
        <dbReference type="ChEBI" id="CHEBI:29105"/>
        <label>2</label>
    </ligand>
</feature>
<feature type="binding site" evidence="1">
    <location>
        <position position="170"/>
    </location>
    <ligand>
        <name>Zn(2+)</name>
        <dbReference type="ChEBI" id="CHEBI:29105"/>
        <label>2</label>
    </ligand>
</feature>
<feature type="binding site" evidence="1">
    <location>
        <position position="189"/>
    </location>
    <ligand>
        <name>Zn(2+)</name>
        <dbReference type="ChEBI" id="CHEBI:29105"/>
        <label>2</label>
    </ligand>
</feature>
<feature type="binding site" evidence="1">
    <location>
        <position position="192"/>
    </location>
    <ligand>
        <name>Zn(2+)</name>
        <dbReference type="ChEBI" id="CHEBI:29105"/>
        <label>2</label>
    </ligand>
</feature>
<feature type="binding site" evidence="1">
    <location>
        <position position="203"/>
    </location>
    <ligand>
        <name>Zn(2+)</name>
        <dbReference type="ChEBI" id="CHEBI:29105"/>
        <label>1</label>
    </ligand>
</feature>
<feature type="binding site" evidence="1">
    <location>
        <position position="206"/>
    </location>
    <ligand>
        <name>Zn(2+)</name>
        <dbReference type="ChEBI" id="CHEBI:29105"/>
        <label>1</label>
    </ligand>
</feature>
<sequence length="391" mass="42391">MATKTCYYEVLKVERTATKQQVDRAYRKLAIKYHPDSNRDDGSATAKFKEATEAYEVLSDANKRARYDQYGHAGVEGATQQYGDVEDIFEAFGDLFGGGFGDFFGGGSRRGGGRRRVRRGADVRCDVTLTLEEAARGCHKDIVFRRRVSCDTCDGSGAAAGSEPVTCTMCGGQGQVIQSAGILRVQTTCPTCKGAGKQIGEPCGKCRGTGTQNEKAEMNVEIPAGVDDGMRVRLQGEGEPSPDGGPNGDCYCFISVKEHNLFKREGQHLILQMPISYAQAALGATINVPTLDGPHELTVPAGTQTGHVFTVRGQGIVDPRSGRTGDLLVQIFIEVPKKLSDKQQKLLRELAELDHDSVLPERTSFLDKLRHFFDPEPEEAGTGSTDTEKDS</sequence>
<name>DNAJ_RHOBA</name>
<reference key="1">
    <citation type="journal article" date="2003" name="Proc. Natl. Acad. Sci. U.S.A.">
        <title>Complete genome sequence of the marine planctomycete Pirellula sp. strain 1.</title>
        <authorList>
            <person name="Gloeckner F.O."/>
            <person name="Kube M."/>
            <person name="Bauer M."/>
            <person name="Teeling H."/>
            <person name="Lombardot T."/>
            <person name="Ludwig W."/>
            <person name="Gade D."/>
            <person name="Beck A."/>
            <person name="Borzym K."/>
            <person name="Heitmann K."/>
            <person name="Rabus R."/>
            <person name="Schlesner H."/>
            <person name="Amann R."/>
            <person name="Reinhardt R."/>
        </authorList>
    </citation>
    <scope>NUCLEOTIDE SEQUENCE [LARGE SCALE GENOMIC DNA]</scope>
    <source>
        <strain>DSM 10527 / NCIMB 13988 / SH1</strain>
    </source>
</reference>
<keyword id="KW-0143">Chaperone</keyword>
<keyword id="KW-0963">Cytoplasm</keyword>
<keyword id="KW-0235">DNA replication</keyword>
<keyword id="KW-0479">Metal-binding</keyword>
<keyword id="KW-1185">Reference proteome</keyword>
<keyword id="KW-0677">Repeat</keyword>
<keyword id="KW-0346">Stress response</keyword>
<keyword id="KW-0862">Zinc</keyword>
<keyword id="KW-0863">Zinc-finger</keyword>
<protein>
    <recommendedName>
        <fullName evidence="1">Chaperone protein DnaJ</fullName>
    </recommendedName>
</protein>
<dbReference type="EMBL" id="BX294148">
    <property type="protein sequence ID" value="CAD76021.1"/>
    <property type="molecule type" value="Genomic_DNA"/>
</dbReference>
<dbReference type="RefSeq" id="NP_868644.1">
    <property type="nucleotide sequence ID" value="NC_005027.1"/>
</dbReference>
<dbReference type="RefSeq" id="WP_011122091.1">
    <property type="nucleotide sequence ID" value="NC_005027.1"/>
</dbReference>
<dbReference type="SMR" id="Q7UM96"/>
<dbReference type="FunCoup" id="Q7UM96">
    <property type="interactions" value="560"/>
</dbReference>
<dbReference type="STRING" id="243090.RB8972"/>
<dbReference type="EnsemblBacteria" id="CAD76021">
    <property type="protein sequence ID" value="CAD76021"/>
    <property type="gene ID" value="RB8972"/>
</dbReference>
<dbReference type="KEGG" id="rba:RB8972"/>
<dbReference type="PATRIC" id="fig|243090.15.peg.4304"/>
<dbReference type="eggNOG" id="COG0484">
    <property type="taxonomic scope" value="Bacteria"/>
</dbReference>
<dbReference type="HOGENOM" id="CLU_017633_0_7_0"/>
<dbReference type="InParanoid" id="Q7UM96"/>
<dbReference type="OrthoDB" id="9779889at2"/>
<dbReference type="Proteomes" id="UP000001025">
    <property type="component" value="Chromosome"/>
</dbReference>
<dbReference type="GO" id="GO:0005737">
    <property type="term" value="C:cytoplasm"/>
    <property type="evidence" value="ECO:0000318"/>
    <property type="project" value="GO_Central"/>
</dbReference>
<dbReference type="GO" id="GO:0005524">
    <property type="term" value="F:ATP binding"/>
    <property type="evidence" value="ECO:0007669"/>
    <property type="project" value="InterPro"/>
</dbReference>
<dbReference type="GO" id="GO:0031072">
    <property type="term" value="F:heat shock protein binding"/>
    <property type="evidence" value="ECO:0007669"/>
    <property type="project" value="InterPro"/>
</dbReference>
<dbReference type="GO" id="GO:0051082">
    <property type="term" value="F:unfolded protein binding"/>
    <property type="evidence" value="ECO:0000318"/>
    <property type="project" value="GO_Central"/>
</dbReference>
<dbReference type="GO" id="GO:0008270">
    <property type="term" value="F:zinc ion binding"/>
    <property type="evidence" value="ECO:0007669"/>
    <property type="project" value="UniProtKB-UniRule"/>
</dbReference>
<dbReference type="GO" id="GO:0051085">
    <property type="term" value="P:chaperone cofactor-dependent protein refolding"/>
    <property type="evidence" value="ECO:0000318"/>
    <property type="project" value="GO_Central"/>
</dbReference>
<dbReference type="GO" id="GO:0006260">
    <property type="term" value="P:DNA replication"/>
    <property type="evidence" value="ECO:0007669"/>
    <property type="project" value="UniProtKB-KW"/>
</dbReference>
<dbReference type="GO" id="GO:0042026">
    <property type="term" value="P:protein refolding"/>
    <property type="evidence" value="ECO:0000318"/>
    <property type="project" value="GO_Central"/>
</dbReference>
<dbReference type="GO" id="GO:0009408">
    <property type="term" value="P:response to heat"/>
    <property type="evidence" value="ECO:0007669"/>
    <property type="project" value="InterPro"/>
</dbReference>
<dbReference type="CDD" id="cd06257">
    <property type="entry name" value="DnaJ"/>
    <property type="match status" value="1"/>
</dbReference>
<dbReference type="CDD" id="cd10747">
    <property type="entry name" value="DnaJ_C"/>
    <property type="match status" value="1"/>
</dbReference>
<dbReference type="FunFam" id="1.10.287.110:FF:000034">
    <property type="entry name" value="Chaperone protein DnaJ"/>
    <property type="match status" value="1"/>
</dbReference>
<dbReference type="FunFam" id="2.10.230.10:FF:000002">
    <property type="entry name" value="Molecular chaperone DnaJ"/>
    <property type="match status" value="1"/>
</dbReference>
<dbReference type="FunFam" id="2.60.260.20:FF:000004">
    <property type="entry name" value="Molecular chaperone DnaJ"/>
    <property type="match status" value="1"/>
</dbReference>
<dbReference type="Gene3D" id="1.10.287.110">
    <property type="entry name" value="DnaJ domain"/>
    <property type="match status" value="1"/>
</dbReference>
<dbReference type="Gene3D" id="2.10.230.10">
    <property type="entry name" value="Heat shock protein DnaJ, cysteine-rich domain"/>
    <property type="match status" value="1"/>
</dbReference>
<dbReference type="Gene3D" id="2.60.260.20">
    <property type="entry name" value="Urease metallochaperone UreE, N-terminal domain"/>
    <property type="match status" value="2"/>
</dbReference>
<dbReference type="HAMAP" id="MF_01152">
    <property type="entry name" value="DnaJ"/>
    <property type="match status" value="1"/>
</dbReference>
<dbReference type="InterPro" id="IPR012724">
    <property type="entry name" value="DnaJ"/>
</dbReference>
<dbReference type="InterPro" id="IPR002939">
    <property type="entry name" value="DnaJ_C"/>
</dbReference>
<dbReference type="InterPro" id="IPR001623">
    <property type="entry name" value="DnaJ_domain"/>
</dbReference>
<dbReference type="InterPro" id="IPR018253">
    <property type="entry name" value="DnaJ_domain_CS"/>
</dbReference>
<dbReference type="InterPro" id="IPR008971">
    <property type="entry name" value="HSP40/DnaJ_pept-bd"/>
</dbReference>
<dbReference type="InterPro" id="IPR001305">
    <property type="entry name" value="HSP_DnaJ_Cys-rich_dom"/>
</dbReference>
<dbReference type="InterPro" id="IPR036410">
    <property type="entry name" value="HSP_DnaJ_Cys-rich_dom_sf"/>
</dbReference>
<dbReference type="InterPro" id="IPR036869">
    <property type="entry name" value="J_dom_sf"/>
</dbReference>
<dbReference type="NCBIfam" id="TIGR02349">
    <property type="entry name" value="DnaJ_bact"/>
    <property type="match status" value="1"/>
</dbReference>
<dbReference type="NCBIfam" id="NF008035">
    <property type="entry name" value="PRK10767.1"/>
    <property type="match status" value="1"/>
</dbReference>
<dbReference type="PANTHER" id="PTHR43096:SF48">
    <property type="entry name" value="CHAPERONE PROTEIN DNAJ"/>
    <property type="match status" value="1"/>
</dbReference>
<dbReference type="PANTHER" id="PTHR43096">
    <property type="entry name" value="DNAJ HOMOLOG 1, MITOCHONDRIAL-RELATED"/>
    <property type="match status" value="1"/>
</dbReference>
<dbReference type="Pfam" id="PF00226">
    <property type="entry name" value="DnaJ"/>
    <property type="match status" value="1"/>
</dbReference>
<dbReference type="Pfam" id="PF01556">
    <property type="entry name" value="DnaJ_C"/>
    <property type="match status" value="1"/>
</dbReference>
<dbReference type="Pfam" id="PF00684">
    <property type="entry name" value="DnaJ_CXXCXGXG"/>
    <property type="match status" value="1"/>
</dbReference>
<dbReference type="PRINTS" id="PR00625">
    <property type="entry name" value="JDOMAIN"/>
</dbReference>
<dbReference type="SMART" id="SM00271">
    <property type="entry name" value="DnaJ"/>
    <property type="match status" value="1"/>
</dbReference>
<dbReference type="SUPFAM" id="SSF46565">
    <property type="entry name" value="Chaperone J-domain"/>
    <property type="match status" value="1"/>
</dbReference>
<dbReference type="SUPFAM" id="SSF57938">
    <property type="entry name" value="DnaJ/Hsp40 cysteine-rich domain"/>
    <property type="match status" value="1"/>
</dbReference>
<dbReference type="SUPFAM" id="SSF49493">
    <property type="entry name" value="HSP40/DnaJ peptide-binding domain"/>
    <property type="match status" value="2"/>
</dbReference>
<dbReference type="PROSITE" id="PS00636">
    <property type="entry name" value="DNAJ_1"/>
    <property type="match status" value="1"/>
</dbReference>
<dbReference type="PROSITE" id="PS50076">
    <property type="entry name" value="DNAJ_2"/>
    <property type="match status" value="1"/>
</dbReference>
<dbReference type="PROSITE" id="PS51188">
    <property type="entry name" value="ZF_CR"/>
    <property type="match status" value="1"/>
</dbReference>
<comment type="function">
    <text evidence="1">Participates actively in the response to hyperosmotic and heat shock by preventing the aggregation of stress-denatured proteins and by disaggregating proteins, also in an autonomous, DnaK-independent fashion. Unfolded proteins bind initially to DnaJ; upon interaction with the DnaJ-bound protein, DnaK hydrolyzes its bound ATP, resulting in the formation of a stable complex. GrpE releases ADP from DnaK; ATP binding to DnaK triggers the release of the substrate protein, thus completing the reaction cycle. Several rounds of ATP-dependent interactions between DnaJ, DnaK and GrpE are required for fully efficient folding. Also involved, together with DnaK and GrpE, in the DNA replication of plasmids through activation of initiation proteins.</text>
</comment>
<comment type="cofactor">
    <cofactor evidence="1">
        <name>Zn(2+)</name>
        <dbReference type="ChEBI" id="CHEBI:29105"/>
    </cofactor>
    <text evidence="1">Binds 2 Zn(2+) ions per monomer.</text>
</comment>
<comment type="subunit">
    <text evidence="1">Homodimer.</text>
</comment>
<comment type="subcellular location">
    <subcellularLocation>
        <location evidence="1">Cytoplasm</location>
    </subcellularLocation>
</comment>
<comment type="domain">
    <text evidence="1">The J domain is necessary and sufficient to stimulate DnaK ATPase activity. Zinc center 1 plays an important role in the autonomous, DnaK-independent chaperone activity of DnaJ. Zinc center 2 is essential for interaction with DnaK and for DnaJ activity.</text>
</comment>
<comment type="similarity">
    <text evidence="1">Belongs to the DnaJ family.</text>
</comment>
<evidence type="ECO:0000255" key="1">
    <source>
        <dbReference type="HAMAP-Rule" id="MF_01152"/>
    </source>
</evidence>
<evidence type="ECO:0000256" key="2">
    <source>
        <dbReference type="SAM" id="MobiDB-lite"/>
    </source>
</evidence>
<organism>
    <name type="scientific">Rhodopirellula baltica (strain DSM 10527 / NCIMB 13988 / SH1)</name>
    <dbReference type="NCBI Taxonomy" id="243090"/>
    <lineage>
        <taxon>Bacteria</taxon>
        <taxon>Pseudomonadati</taxon>
        <taxon>Planctomycetota</taxon>
        <taxon>Planctomycetia</taxon>
        <taxon>Pirellulales</taxon>
        <taxon>Pirellulaceae</taxon>
        <taxon>Rhodopirellula</taxon>
    </lineage>
</organism>